<proteinExistence type="evidence at protein level"/>
<protein>
    <recommendedName>
        <fullName evidence="12">Phosphoglycerate kinase 3, cytosolic</fullName>
        <ecNumber evidence="1">2.7.2.3</ecNumber>
    </recommendedName>
</protein>
<accession>Q9SAJ4</accession>
<accession>C0Z3A6</accession>
<accession>Q56ZW1</accession>
<accession>Q8LFV7</accession>
<keyword id="KW-0025">Alternative splicing</keyword>
<keyword id="KW-0067">ATP-binding</keyword>
<keyword id="KW-0963">Cytoplasm</keyword>
<keyword id="KW-0324">Glycolysis</keyword>
<keyword id="KW-0418">Kinase</keyword>
<keyword id="KW-0460">Magnesium</keyword>
<keyword id="KW-0479">Metal-binding</keyword>
<keyword id="KW-0547">Nucleotide-binding</keyword>
<keyword id="KW-1185">Reference proteome</keyword>
<keyword id="KW-0808">Transferase</keyword>
<gene>
    <name evidence="12" type="primary">PGK3</name>
    <name evidence="14" type="ordered locus">At1g79550</name>
    <name evidence="15" type="ORF">T8K14.3</name>
</gene>
<organism>
    <name type="scientific">Arabidopsis thaliana</name>
    <name type="common">Mouse-ear cress</name>
    <dbReference type="NCBI Taxonomy" id="3702"/>
    <lineage>
        <taxon>Eukaryota</taxon>
        <taxon>Viridiplantae</taxon>
        <taxon>Streptophyta</taxon>
        <taxon>Embryophyta</taxon>
        <taxon>Tracheophyta</taxon>
        <taxon>Spermatophyta</taxon>
        <taxon>Magnoliopsida</taxon>
        <taxon>eudicotyledons</taxon>
        <taxon>Gunneridae</taxon>
        <taxon>Pentapetalae</taxon>
        <taxon>rosids</taxon>
        <taxon>malvids</taxon>
        <taxon>Brassicales</taxon>
        <taxon>Brassicaceae</taxon>
        <taxon>Camelineae</taxon>
        <taxon>Arabidopsis</taxon>
    </lineage>
</organism>
<sequence>MATKRSVGTLKEADLKGKSVFVRVDLNVPLDDNSNITDDTRIRAAVPTIKYLMGNGSRVVLCSHLGRPKGVTPKYSLKPLVPRLSELLGVEVVMANDSIGEEVQKLVAGLPEGGVLLLENVRFYAEEEKNDPEFAKKLAALADVYVNDAFGTAHRAHASTEGVAKFLKPSVAGFLMQKELDYLVGAVANPKKPFAAIVGGSKVSTKIGVIESLLNTVDILLLGGGMIFTFYKAQGLSVGSSLVEEDKLDLAKSLMEKAKAKGVSLLLPTDVVIADKFAPDANSKIVPATAIPDGWMGLDIGPDSIKTFSEALDTTKTIIWNGPMGVFEFDKFAAGTEAVAKQLAELSGKGVTTIIGGGDSVAAVEKVGLADKMSHISTGGGASLELLEGKPLPGVLALDEA</sequence>
<comment type="catalytic activity">
    <reaction evidence="1">
        <text>(2R)-3-phosphoglycerate + ATP = (2R)-3-phospho-glyceroyl phosphate + ADP</text>
        <dbReference type="Rhea" id="RHEA:14801"/>
        <dbReference type="ChEBI" id="CHEBI:30616"/>
        <dbReference type="ChEBI" id="CHEBI:57604"/>
        <dbReference type="ChEBI" id="CHEBI:58272"/>
        <dbReference type="ChEBI" id="CHEBI:456216"/>
        <dbReference type="EC" id="2.7.2.3"/>
    </reaction>
</comment>
<comment type="cofactor">
    <cofactor evidence="1">
        <name>Mg(2+)</name>
        <dbReference type="ChEBI" id="CHEBI:18420"/>
    </cofactor>
</comment>
<comment type="pathway">
    <text evidence="13">Carbohydrate degradation; glycolysis; pyruvate from D-glyceraldehyde 3-phosphate: step 2/5.</text>
</comment>
<comment type="subunit">
    <text evidence="2">Monomer.</text>
</comment>
<comment type="subcellular location">
    <subcellularLocation>
        <location evidence="2">Cytoplasm</location>
    </subcellularLocation>
</comment>
<comment type="alternative products">
    <event type="alternative splicing"/>
    <isoform>
        <id>Q9SAJ4-1</id>
        <name>1</name>
        <sequence type="displayed"/>
    </isoform>
    <isoform>
        <id>Q9SAJ4-2</id>
        <name>2</name>
        <sequence type="described" ref="VSP_058567"/>
    </isoform>
</comment>
<comment type="tissue specificity">
    <text evidence="11">Expressed in roots, leaves and inflorescence.</text>
</comment>
<comment type="developmental stage">
    <text evidence="8">Accumulates in developing seeds 5 days after flowering (DAF).</text>
</comment>
<comment type="induction">
    <text evidence="5 6 7 9 10">Repressed by glucose-hexokinase treatment (PubMed:16199612). Induced by heat stress (e.g. 37 degrees Celsius) (PubMed:17085506, PubMed:18055584). Accumulates in response to 3-oxo-octanoyl-homoserine lactone treatment (3OC8-HSL), a bacterial quorum-sensing signal (PubMed:22995300). Regulated by light (PubMed:24884362).</text>
</comment>
<comment type="similarity">
    <text evidence="13">Belongs to the phosphoglycerate kinase family.</text>
</comment>
<feature type="chain" id="PRO_0000437736" description="Phosphoglycerate kinase 3, cytosolic">
    <location>
        <begin position="1"/>
        <end position="401"/>
    </location>
</feature>
<feature type="binding site" evidence="1">
    <location>
        <position position="24"/>
    </location>
    <ligand>
        <name>(2R)-3-phosphoglycerate</name>
        <dbReference type="ChEBI" id="CHEBI:58272"/>
    </ligand>
</feature>
<feature type="binding site" evidence="4">
    <location>
        <position position="25"/>
    </location>
    <ligand>
        <name>(2R)-3-phosphoglycerate</name>
        <dbReference type="ChEBI" id="CHEBI:58272"/>
    </ligand>
</feature>
<feature type="binding site" evidence="4">
    <location>
        <position position="27"/>
    </location>
    <ligand>
        <name>(2R)-3-phosphoglycerate</name>
        <dbReference type="ChEBI" id="CHEBI:58272"/>
    </ligand>
</feature>
<feature type="binding site" evidence="4">
    <location>
        <position position="41"/>
    </location>
    <ligand>
        <name>(2R)-3-phosphoglycerate</name>
        <dbReference type="ChEBI" id="CHEBI:58272"/>
    </ligand>
</feature>
<feature type="binding site" evidence="1">
    <location>
        <position position="63"/>
    </location>
    <ligand>
        <name>(2R)-3-phosphoglycerate</name>
        <dbReference type="ChEBI" id="CHEBI:58272"/>
    </ligand>
</feature>
<feature type="binding site" evidence="4">
    <location>
        <position position="64"/>
    </location>
    <ligand>
        <name>(2R)-3-phosphoglycerate</name>
        <dbReference type="ChEBI" id="CHEBI:58272"/>
    </ligand>
</feature>
<feature type="binding site" evidence="1">
    <location>
        <position position="66"/>
    </location>
    <ligand>
        <name>(2R)-3-phosphoglycerate</name>
        <dbReference type="ChEBI" id="CHEBI:58272"/>
    </ligand>
</feature>
<feature type="binding site" evidence="4">
    <location>
        <position position="67"/>
    </location>
    <ligand>
        <name>(2R)-3-phosphoglycerate</name>
        <dbReference type="ChEBI" id="CHEBI:58272"/>
    </ligand>
</feature>
<feature type="binding site" evidence="4">
    <location>
        <position position="122"/>
    </location>
    <ligand>
        <name>(2R)-3-phosphoglycerate</name>
        <dbReference type="ChEBI" id="CHEBI:58272"/>
    </ligand>
</feature>
<feature type="binding site" evidence="1">
    <location>
        <position position="154"/>
    </location>
    <ligand>
        <name>(2R)-3-phosphoglycerate</name>
        <dbReference type="ChEBI" id="CHEBI:58272"/>
    </ligand>
</feature>
<feature type="binding site" evidence="4">
    <location>
        <position position="155"/>
    </location>
    <ligand>
        <name>(2R)-3-phosphoglycerate</name>
        <dbReference type="ChEBI" id="CHEBI:58272"/>
    </ligand>
</feature>
<feature type="binding site" evidence="1">
    <location>
        <position position="200"/>
    </location>
    <ligand>
        <name>ADP</name>
        <dbReference type="ChEBI" id="CHEBI:456216"/>
    </ligand>
</feature>
<feature type="binding site" evidence="1">
    <location>
        <position position="200"/>
    </location>
    <ligand>
        <name>CDP</name>
        <dbReference type="ChEBI" id="CHEBI:58069"/>
    </ligand>
</feature>
<feature type="binding site" evidence="4">
    <location>
        <position position="202"/>
    </location>
    <ligand>
        <name>AMP</name>
        <dbReference type="ChEBI" id="CHEBI:456215"/>
    </ligand>
</feature>
<feature type="binding site" evidence="4">
    <location>
        <position position="206"/>
    </location>
    <ligand>
        <name>AMP</name>
        <dbReference type="ChEBI" id="CHEBI:456215"/>
    </ligand>
</feature>
<feature type="binding site" evidence="3">
    <location>
        <position position="206"/>
    </location>
    <ligand>
        <name>ATP</name>
        <dbReference type="ChEBI" id="CHEBI:30616"/>
    </ligand>
</feature>
<feature type="binding site" evidence="1">
    <location>
        <position position="224"/>
    </location>
    <ligand>
        <name>ADP</name>
        <dbReference type="ChEBI" id="CHEBI:456216"/>
    </ligand>
</feature>
<feature type="binding site" evidence="1">
    <location>
        <position position="224"/>
    </location>
    <ligand>
        <name>CDP</name>
        <dbReference type="ChEBI" id="CHEBI:58069"/>
    </ligand>
</feature>
<feature type="binding site" evidence="4">
    <location>
        <position position="225"/>
    </location>
    <ligand>
        <name>AMP</name>
        <dbReference type="ChEBI" id="CHEBI:456215"/>
    </ligand>
</feature>
<feature type="binding site" evidence="4">
    <location>
        <position position="225"/>
    </location>
    <ligand>
        <name>ATP</name>
        <dbReference type="ChEBI" id="CHEBI:30616"/>
    </ligand>
</feature>
<feature type="binding site" evidence="4">
    <location>
        <position position="297"/>
    </location>
    <ligand>
        <name>AMP</name>
        <dbReference type="ChEBI" id="CHEBI:456215"/>
    </ligand>
</feature>
<feature type="binding site" evidence="4">
    <location>
        <position position="297"/>
    </location>
    <ligand>
        <name>ATP</name>
        <dbReference type="ChEBI" id="CHEBI:30616"/>
    </ligand>
</feature>
<feature type="binding site" evidence="3">
    <location>
        <position position="321"/>
    </location>
    <ligand>
        <name>ATP</name>
        <dbReference type="ChEBI" id="CHEBI:30616"/>
    </ligand>
</feature>
<feature type="binding site" evidence="1">
    <location>
        <position position="322"/>
    </location>
    <ligand>
        <name>CDP</name>
        <dbReference type="ChEBI" id="CHEBI:58069"/>
    </ligand>
</feature>
<feature type="binding site" evidence="1">
    <location>
        <position position="327"/>
    </location>
    <ligand>
        <name>ADP</name>
        <dbReference type="ChEBI" id="CHEBI:456216"/>
    </ligand>
</feature>
<feature type="binding site" evidence="1">
    <location>
        <position position="327"/>
    </location>
    <ligand>
        <name>CDP</name>
        <dbReference type="ChEBI" id="CHEBI:58069"/>
    </ligand>
</feature>
<feature type="binding site" evidence="4">
    <location>
        <position position="328"/>
    </location>
    <ligand>
        <name>AMP</name>
        <dbReference type="ChEBI" id="CHEBI:456215"/>
    </ligand>
</feature>
<feature type="binding site" evidence="3">
    <location>
        <position position="328"/>
    </location>
    <ligand>
        <name>ATP</name>
        <dbReference type="ChEBI" id="CHEBI:30616"/>
    </ligand>
</feature>
<feature type="binding site" evidence="4">
    <location>
        <position position="359"/>
    </location>
    <ligand>
        <name>ATP</name>
        <dbReference type="ChEBI" id="CHEBI:30616"/>
    </ligand>
</feature>
<feature type="binding site" evidence="4">
    <location>
        <position position="359"/>
    </location>
    <ligand>
        <name>Mg(2+)</name>
        <dbReference type="ChEBI" id="CHEBI:18420"/>
    </ligand>
</feature>
<feature type="binding site" evidence="4">
    <location>
        <position position="360"/>
    </location>
    <ligand>
        <name>ATP</name>
        <dbReference type="ChEBI" id="CHEBI:30616"/>
    </ligand>
</feature>
<feature type="splice variant" id="VSP_058567" description="In isoform 2.">
    <location>
        <begin position="1"/>
        <end position="175"/>
    </location>
</feature>
<feature type="sequence conflict" description="In Ref. 6; AAM61185." evidence="13" ref="6">
    <original>F</original>
    <variation>Y</variation>
    <location>
        <position position="166"/>
    </location>
</feature>
<feature type="sequence conflict" description="In Ref. 6; AAM61185." evidence="13" ref="6">
    <original>L</original>
    <variation>I</variation>
    <location>
        <position position="387"/>
    </location>
</feature>
<name>PGKY3_ARATH</name>
<reference key="1">
    <citation type="submission" date="2000-03" db="EMBL/GenBank/DDBJ databases">
        <title>Structure and regulation of nuclear genes encoding chloroplast and cytosolic phosphoglycerate kinase in Arabidopsis thaliana.</title>
        <authorList>
            <person name="Shih M.-C."/>
        </authorList>
    </citation>
    <scope>NUCLEOTIDE SEQUENCE [MRNA] (ISOFORM 1)</scope>
</reference>
<reference key="2">
    <citation type="journal article" date="2000" name="Nature">
        <title>Sequence and analysis of chromosome 1 of the plant Arabidopsis thaliana.</title>
        <authorList>
            <person name="Theologis A."/>
            <person name="Ecker J.R."/>
            <person name="Palm C.J."/>
            <person name="Federspiel N.A."/>
            <person name="Kaul S."/>
            <person name="White O."/>
            <person name="Alonso J."/>
            <person name="Altafi H."/>
            <person name="Araujo R."/>
            <person name="Bowman C.L."/>
            <person name="Brooks S.Y."/>
            <person name="Buehler E."/>
            <person name="Chan A."/>
            <person name="Chao Q."/>
            <person name="Chen H."/>
            <person name="Cheuk R.F."/>
            <person name="Chin C.W."/>
            <person name="Chung M.K."/>
            <person name="Conn L."/>
            <person name="Conway A.B."/>
            <person name="Conway A.R."/>
            <person name="Creasy T.H."/>
            <person name="Dewar K."/>
            <person name="Dunn P."/>
            <person name="Etgu P."/>
            <person name="Feldblyum T.V."/>
            <person name="Feng J.-D."/>
            <person name="Fong B."/>
            <person name="Fujii C.Y."/>
            <person name="Gill J.E."/>
            <person name="Goldsmith A.D."/>
            <person name="Haas B."/>
            <person name="Hansen N.F."/>
            <person name="Hughes B."/>
            <person name="Huizar L."/>
            <person name="Hunter J.L."/>
            <person name="Jenkins J."/>
            <person name="Johnson-Hopson C."/>
            <person name="Khan S."/>
            <person name="Khaykin E."/>
            <person name="Kim C.J."/>
            <person name="Koo H.L."/>
            <person name="Kremenetskaia I."/>
            <person name="Kurtz D.B."/>
            <person name="Kwan A."/>
            <person name="Lam B."/>
            <person name="Langin-Hooper S."/>
            <person name="Lee A."/>
            <person name="Lee J.M."/>
            <person name="Lenz C.A."/>
            <person name="Li J.H."/>
            <person name="Li Y.-P."/>
            <person name="Lin X."/>
            <person name="Liu S.X."/>
            <person name="Liu Z.A."/>
            <person name="Luros J.S."/>
            <person name="Maiti R."/>
            <person name="Marziali A."/>
            <person name="Militscher J."/>
            <person name="Miranda M."/>
            <person name="Nguyen M."/>
            <person name="Nierman W.C."/>
            <person name="Osborne B.I."/>
            <person name="Pai G."/>
            <person name="Peterson J."/>
            <person name="Pham P.K."/>
            <person name="Rizzo M."/>
            <person name="Rooney T."/>
            <person name="Rowley D."/>
            <person name="Sakano H."/>
            <person name="Salzberg S.L."/>
            <person name="Schwartz J.R."/>
            <person name="Shinn P."/>
            <person name="Southwick A.M."/>
            <person name="Sun H."/>
            <person name="Tallon L.J."/>
            <person name="Tambunga G."/>
            <person name="Toriumi M.J."/>
            <person name="Town C.D."/>
            <person name="Utterback T."/>
            <person name="Van Aken S."/>
            <person name="Vaysberg M."/>
            <person name="Vysotskaia V.S."/>
            <person name="Walker M."/>
            <person name="Wu D."/>
            <person name="Yu G."/>
            <person name="Fraser C.M."/>
            <person name="Venter J.C."/>
            <person name="Davis R.W."/>
        </authorList>
    </citation>
    <scope>NUCLEOTIDE SEQUENCE [LARGE SCALE GENOMIC DNA]</scope>
    <source>
        <strain>cv. Columbia</strain>
    </source>
</reference>
<reference key="3">
    <citation type="journal article" date="2017" name="Plant J.">
        <title>Araport11: a complete reannotation of the Arabidopsis thaliana reference genome.</title>
        <authorList>
            <person name="Cheng C.Y."/>
            <person name="Krishnakumar V."/>
            <person name="Chan A.P."/>
            <person name="Thibaud-Nissen F."/>
            <person name="Schobel S."/>
            <person name="Town C.D."/>
        </authorList>
    </citation>
    <scope>GENOME REANNOTATION</scope>
    <source>
        <strain>cv. Columbia</strain>
    </source>
</reference>
<reference key="4">
    <citation type="journal article" date="2003" name="Science">
        <title>Empirical analysis of transcriptional activity in the Arabidopsis genome.</title>
        <authorList>
            <person name="Yamada K."/>
            <person name="Lim J."/>
            <person name="Dale J.M."/>
            <person name="Chen H."/>
            <person name="Shinn P."/>
            <person name="Palm C.J."/>
            <person name="Southwick A.M."/>
            <person name="Wu H.C."/>
            <person name="Kim C.J."/>
            <person name="Nguyen M."/>
            <person name="Pham P.K."/>
            <person name="Cheuk R.F."/>
            <person name="Karlin-Newmann G."/>
            <person name="Liu S.X."/>
            <person name="Lam B."/>
            <person name="Sakano H."/>
            <person name="Wu T."/>
            <person name="Yu G."/>
            <person name="Miranda M."/>
            <person name="Quach H.L."/>
            <person name="Tripp M."/>
            <person name="Chang C.H."/>
            <person name="Lee J.M."/>
            <person name="Toriumi M.J."/>
            <person name="Chan M.M."/>
            <person name="Tang C.C."/>
            <person name="Onodera C.S."/>
            <person name="Deng J.M."/>
            <person name="Akiyama K."/>
            <person name="Ansari Y."/>
            <person name="Arakawa T."/>
            <person name="Banh J."/>
            <person name="Banno F."/>
            <person name="Bowser L."/>
            <person name="Brooks S.Y."/>
            <person name="Carninci P."/>
            <person name="Chao Q."/>
            <person name="Choy N."/>
            <person name="Enju A."/>
            <person name="Goldsmith A.D."/>
            <person name="Gurjal M."/>
            <person name="Hansen N.F."/>
            <person name="Hayashizaki Y."/>
            <person name="Johnson-Hopson C."/>
            <person name="Hsuan V.W."/>
            <person name="Iida K."/>
            <person name="Karnes M."/>
            <person name="Khan S."/>
            <person name="Koesema E."/>
            <person name="Ishida J."/>
            <person name="Jiang P.X."/>
            <person name="Jones T."/>
            <person name="Kawai J."/>
            <person name="Kamiya A."/>
            <person name="Meyers C."/>
            <person name="Nakajima M."/>
            <person name="Narusaka M."/>
            <person name="Seki M."/>
            <person name="Sakurai T."/>
            <person name="Satou M."/>
            <person name="Tamse R."/>
            <person name="Vaysberg M."/>
            <person name="Wallender E.K."/>
            <person name="Wong C."/>
            <person name="Yamamura Y."/>
            <person name="Yuan S."/>
            <person name="Shinozaki K."/>
            <person name="Davis R.W."/>
            <person name="Theologis A."/>
            <person name="Ecker J.R."/>
        </authorList>
    </citation>
    <scope>NUCLEOTIDE SEQUENCE [LARGE SCALE MRNA] (ISOFORM 1)</scope>
    <source>
        <strain>cv. Columbia</strain>
    </source>
</reference>
<reference key="5">
    <citation type="journal article" date="2009" name="DNA Res.">
        <title>Analysis of multiple occurrences of alternative splicing events in Arabidopsis thaliana using novel sequenced full-length cDNAs.</title>
        <authorList>
            <person name="Iida K."/>
            <person name="Fukami-Kobayashi K."/>
            <person name="Toyoda A."/>
            <person name="Sakaki Y."/>
            <person name="Kobayashi M."/>
            <person name="Seki M."/>
            <person name="Shinozaki K."/>
        </authorList>
    </citation>
    <scope>NUCLEOTIDE SEQUENCE [LARGE SCALE MRNA] (ISOFORM 2)</scope>
    <source>
        <strain>cv. Columbia</strain>
        <tissue>Root</tissue>
    </source>
</reference>
<reference key="6">
    <citation type="submission" date="2002-03" db="EMBL/GenBank/DDBJ databases">
        <title>Full-length cDNA from Arabidopsis thaliana.</title>
        <authorList>
            <person name="Brover V.V."/>
            <person name="Troukhan M.E."/>
            <person name="Alexandrov N.A."/>
            <person name="Lu Y.-P."/>
            <person name="Flavell R.B."/>
            <person name="Feldmann K.A."/>
        </authorList>
    </citation>
    <scope>NUCLEOTIDE SEQUENCE [LARGE SCALE MRNA] (ISOFORM 1)</scope>
</reference>
<reference key="7">
    <citation type="submission" date="2005-03" db="EMBL/GenBank/DDBJ databases">
        <title>Large-scale analysis of RIKEN Arabidopsis full-length (RAFL) cDNAs.</title>
        <authorList>
            <person name="Totoki Y."/>
            <person name="Seki M."/>
            <person name="Ishida J."/>
            <person name="Nakajima M."/>
            <person name="Enju A."/>
            <person name="Kamiya A."/>
            <person name="Narusaka M."/>
            <person name="Shin-i T."/>
            <person name="Nakagawa M."/>
            <person name="Sakamoto N."/>
            <person name="Oishi K."/>
            <person name="Kohara Y."/>
            <person name="Kobayashi M."/>
            <person name="Toyoda A."/>
            <person name="Sakaki Y."/>
            <person name="Sakurai T."/>
            <person name="Iida K."/>
            <person name="Akiyama K."/>
            <person name="Satou M."/>
            <person name="Toyoda T."/>
            <person name="Konagaya A."/>
            <person name="Carninci P."/>
            <person name="Kawai J."/>
            <person name="Hayashizaki Y."/>
            <person name="Shinozaki K."/>
        </authorList>
    </citation>
    <scope>NUCLEOTIDE SEQUENCE [LARGE SCALE MRNA] OF 271-401 (ISOFORM 1/2)</scope>
    <source>
        <strain>cv. Columbia</strain>
    </source>
</reference>
<reference key="8">
    <citation type="journal article" date="2005" name="Plant Cell">
        <title>Extracellular ATP functions as an endogenous external metabolite regulating plant cell viability.</title>
        <authorList>
            <person name="Chivasa S."/>
            <person name="Ndimba B.K."/>
            <person name="Simon W.J."/>
            <person name="Lindsey K."/>
            <person name="Slabas A.R."/>
        </authorList>
    </citation>
    <scope>INDUCTION BY GLUCOSE-HEXOKINASE</scope>
    <source>
        <strain>cv. Columbia</strain>
        <strain>cv. Landsberg erecta</strain>
    </source>
</reference>
<reference key="9">
    <citation type="journal article" date="2007" name="Plant Physiol.">
        <title>A heat-inducible transcription factor, HsfA2, is required for extension of acquired thermotolerance in Arabidopsis.</title>
        <authorList>
            <person name="Charng Y.-Y."/>
            <person name="Liu H.-C."/>
            <person name="Liu N.-Y."/>
            <person name="Chi W.-T."/>
            <person name="Wang C.-N."/>
            <person name="Chang S.-H."/>
            <person name="Wang T.-T."/>
        </authorList>
    </citation>
    <scope>INDUCTION BY HEAT STRESS</scope>
    <source>
        <strain>cv. Columbia</strain>
    </source>
</reference>
<reference key="10">
    <citation type="journal article" date="2008" name="Plant Physiol.">
        <title>Core genome responses involved in acclimation to high temperature.</title>
        <authorList>
            <person name="Larkindale J."/>
            <person name="Vierling E."/>
        </authorList>
    </citation>
    <scope>INDUCTION BY HEAT STRESS</scope>
</reference>
<reference key="11">
    <citation type="journal article" date="2009" name="J. Proteomics">
        <title>Phosphoproteomic analysis of nuclei-enriched fractions from Arabidopsis thaliana.</title>
        <authorList>
            <person name="Jones A.M.E."/>
            <person name="MacLean D."/>
            <person name="Studholme D.J."/>
            <person name="Serna-Sanz A."/>
            <person name="Andreasson E."/>
            <person name="Rathjen J.P."/>
            <person name="Peck S.C."/>
        </authorList>
    </citation>
    <scope>IDENTIFICATION BY MASS SPECTROMETRY [LARGE SCALE ANALYSIS]</scope>
    <source>
        <strain>cv. Columbia</strain>
    </source>
</reference>
<reference key="12">
    <citation type="journal article" date="2010" name="Plant Physiol.">
        <title>Systems analysis of seed filling in Arabidopsis: using general linear modeling to assess concordance of transcript and protein expression.</title>
        <authorList>
            <person name="Hajduch M."/>
            <person name="Hearne L.B."/>
            <person name="Miernyk J.A."/>
            <person name="Casteel J.E."/>
            <person name="Joshi T."/>
            <person name="Agrawal G.K."/>
            <person name="Song Z."/>
            <person name="Zhou M."/>
            <person name="Xu D."/>
            <person name="Thelen J.J."/>
        </authorList>
    </citation>
    <scope>DEVELOPMENTAL STAGE</scope>
    <scope>IDENTIFICATION BY MASS SPECTROMETRY</scope>
    <source>
        <strain>cv. Columbia</strain>
    </source>
</reference>
<reference key="13">
    <citation type="journal article" date="2012" name="Biochem. Biophys. Res. Commun.">
        <title>A proteomic analysis of Arabidopsis thaliana seedling responses to 3-oxo-octanoyl-homoserine lactone, a bacterial quorum-sensing signal.</title>
        <authorList>
            <person name="Miao C."/>
            <person name="Liu F."/>
            <person name="Zhao Q."/>
            <person name="Jia Z."/>
            <person name="Song S."/>
        </authorList>
    </citation>
    <scope>INDUCTION BY 3OC8-HSL TREATMENT</scope>
</reference>
<reference key="14">
    <citation type="journal article" date="2014" name="BMC Genomics">
        <title>The link between transcript regulation and de novo protein synthesis in the retrograde high light acclimation response of Arabidopsis thaliana.</title>
        <authorList>
            <person name="Oelze M.-L."/>
            <person name="Muthuramalingam M."/>
            <person name="Vogel M.O."/>
            <person name="Dietz K.-J."/>
        </authorList>
    </citation>
    <scope>REGULATION BY LIGHT</scope>
    <scope>IDENTIFICATION BY MASS SPECTROMETRY</scope>
</reference>
<reference key="15">
    <citation type="journal article" date="2014" name="Plant J.">
        <title>Cloning of the Arabidopsis rwm1 gene for resistance to Watermelon mosaic virus points to a new function for natural virus resistance genes.</title>
        <authorList>
            <person name="Ouibrahim L."/>
            <person name="Mazier M."/>
            <person name="Estevan J."/>
            <person name="Pagny G."/>
            <person name="Decroocq V."/>
            <person name="Desbiez C."/>
            <person name="Moretti A."/>
            <person name="Gallois J.L."/>
            <person name="Caranta C."/>
        </authorList>
    </citation>
    <scope>TISSUE SPECIFICITY</scope>
    <scope>GENE FAMILY</scope>
    <scope>NOMENCLATURE</scope>
</reference>
<dbReference type="EC" id="2.7.2.3" evidence="1"/>
<dbReference type="EMBL" id="AF247560">
    <property type="protein sequence ID" value="AAF70260.1"/>
    <property type="molecule type" value="mRNA"/>
</dbReference>
<dbReference type="EMBL" id="AC007202">
    <property type="protein sequence ID" value="AAD30221.1"/>
    <property type="molecule type" value="Genomic_DNA"/>
</dbReference>
<dbReference type="EMBL" id="CP002684">
    <property type="protein sequence ID" value="AEE36262.1"/>
    <property type="molecule type" value="Genomic_DNA"/>
</dbReference>
<dbReference type="EMBL" id="CP002684">
    <property type="protein sequence ID" value="AEE36263.1"/>
    <property type="molecule type" value="Genomic_DNA"/>
</dbReference>
<dbReference type="EMBL" id="AF348582">
    <property type="protein sequence ID" value="AAK15553.1"/>
    <property type="molecule type" value="mRNA"/>
</dbReference>
<dbReference type="EMBL" id="AY062863">
    <property type="protein sequence ID" value="AAL32941.1"/>
    <property type="molecule type" value="mRNA"/>
</dbReference>
<dbReference type="EMBL" id="BT008486">
    <property type="protein sequence ID" value="AAP37845.1"/>
    <property type="molecule type" value="mRNA"/>
</dbReference>
<dbReference type="EMBL" id="AK319070">
    <property type="protein sequence ID" value="BAH57185.1"/>
    <property type="molecule type" value="mRNA"/>
</dbReference>
<dbReference type="EMBL" id="AY084622">
    <property type="protein sequence ID" value="AAM61185.1"/>
    <property type="molecule type" value="mRNA"/>
</dbReference>
<dbReference type="EMBL" id="AK220849">
    <property type="protein sequence ID" value="BAD94190.1"/>
    <property type="molecule type" value="mRNA"/>
</dbReference>
<dbReference type="PIR" id="H96826">
    <property type="entry name" value="H96826"/>
</dbReference>
<dbReference type="RefSeq" id="NP_178073.1">
    <molecule id="Q9SAJ4-1"/>
    <property type="nucleotide sequence ID" value="NM_106603.3"/>
</dbReference>
<dbReference type="RefSeq" id="NP_849907.1">
    <molecule id="Q9SAJ4-1"/>
    <property type="nucleotide sequence ID" value="NM_179576.3"/>
</dbReference>
<dbReference type="SMR" id="Q9SAJ4"/>
<dbReference type="FunCoup" id="Q9SAJ4">
    <property type="interactions" value="2534"/>
</dbReference>
<dbReference type="STRING" id="3702.Q9SAJ4"/>
<dbReference type="iPTMnet" id="Q9SAJ4"/>
<dbReference type="PaxDb" id="3702-AT1G79550.2"/>
<dbReference type="ProteomicsDB" id="235098">
    <molecule id="Q9SAJ4-1"/>
</dbReference>
<dbReference type="EnsemblPlants" id="AT1G79550.1">
    <molecule id="Q9SAJ4-1"/>
    <property type="protein sequence ID" value="AT1G79550.1"/>
    <property type="gene ID" value="AT1G79550"/>
</dbReference>
<dbReference type="EnsemblPlants" id="AT1G79550.2">
    <molecule id="Q9SAJ4-1"/>
    <property type="protein sequence ID" value="AT1G79550.2"/>
    <property type="gene ID" value="AT1G79550"/>
</dbReference>
<dbReference type="GeneID" id="844293"/>
<dbReference type="Gramene" id="AT1G79550.1">
    <molecule id="Q9SAJ4-1"/>
    <property type="protein sequence ID" value="AT1G79550.1"/>
    <property type="gene ID" value="AT1G79550"/>
</dbReference>
<dbReference type="Gramene" id="AT1G79550.2">
    <molecule id="Q9SAJ4-1"/>
    <property type="protein sequence ID" value="AT1G79550.2"/>
    <property type="gene ID" value="AT1G79550"/>
</dbReference>
<dbReference type="KEGG" id="ath:AT1G79550"/>
<dbReference type="Araport" id="AT1G79550"/>
<dbReference type="TAIR" id="AT1G79550">
    <property type="gene designation" value="PGK"/>
</dbReference>
<dbReference type="eggNOG" id="KOG1367">
    <property type="taxonomic scope" value="Eukaryota"/>
</dbReference>
<dbReference type="HOGENOM" id="CLU_025427_0_2_1"/>
<dbReference type="InParanoid" id="Q9SAJ4"/>
<dbReference type="OMA" id="DMIFDIG"/>
<dbReference type="PhylomeDB" id="Q9SAJ4"/>
<dbReference type="UniPathway" id="UPA00109">
    <property type="reaction ID" value="UER00185"/>
</dbReference>
<dbReference type="CD-CODE" id="4299E36E">
    <property type="entry name" value="Nucleolus"/>
</dbReference>
<dbReference type="PRO" id="PR:Q9SAJ4"/>
<dbReference type="Proteomes" id="UP000006548">
    <property type="component" value="Chromosome 1"/>
</dbReference>
<dbReference type="ExpressionAtlas" id="Q9SAJ4">
    <property type="expression patterns" value="baseline and differential"/>
</dbReference>
<dbReference type="GO" id="GO:0048046">
    <property type="term" value="C:apoplast"/>
    <property type="evidence" value="ECO:0007005"/>
    <property type="project" value="TAIR"/>
</dbReference>
<dbReference type="GO" id="GO:0009570">
    <property type="term" value="C:chloroplast stroma"/>
    <property type="evidence" value="ECO:0007005"/>
    <property type="project" value="TAIR"/>
</dbReference>
<dbReference type="GO" id="GO:0005829">
    <property type="term" value="C:cytosol"/>
    <property type="evidence" value="ECO:0000314"/>
    <property type="project" value="TAIR"/>
</dbReference>
<dbReference type="GO" id="GO:0005739">
    <property type="term" value="C:mitochondrion"/>
    <property type="evidence" value="ECO:0007005"/>
    <property type="project" value="TAIR"/>
</dbReference>
<dbReference type="GO" id="GO:0005634">
    <property type="term" value="C:nucleus"/>
    <property type="evidence" value="ECO:0000314"/>
    <property type="project" value="TAIR"/>
</dbReference>
<dbReference type="GO" id="GO:0000325">
    <property type="term" value="C:plant-type vacuole"/>
    <property type="evidence" value="ECO:0007005"/>
    <property type="project" value="TAIR"/>
</dbReference>
<dbReference type="GO" id="GO:0005886">
    <property type="term" value="C:plasma membrane"/>
    <property type="evidence" value="ECO:0007005"/>
    <property type="project" value="TAIR"/>
</dbReference>
<dbReference type="GO" id="GO:0009506">
    <property type="term" value="C:plasmodesma"/>
    <property type="evidence" value="ECO:0007005"/>
    <property type="project" value="TAIR"/>
</dbReference>
<dbReference type="GO" id="GO:0005524">
    <property type="term" value="F:ATP binding"/>
    <property type="evidence" value="ECO:0007669"/>
    <property type="project" value="UniProtKB-KW"/>
</dbReference>
<dbReference type="GO" id="GO:0046872">
    <property type="term" value="F:metal ion binding"/>
    <property type="evidence" value="ECO:0007669"/>
    <property type="project" value="UniProtKB-KW"/>
</dbReference>
<dbReference type="GO" id="GO:0004618">
    <property type="term" value="F:phosphoglycerate kinase activity"/>
    <property type="evidence" value="ECO:0000250"/>
    <property type="project" value="TAIR"/>
</dbReference>
<dbReference type="GO" id="GO:0004672">
    <property type="term" value="F:protein kinase activity"/>
    <property type="evidence" value="ECO:0000314"/>
    <property type="project" value="TAIR"/>
</dbReference>
<dbReference type="GO" id="GO:0006096">
    <property type="term" value="P:glycolytic process"/>
    <property type="evidence" value="ECO:0000315"/>
    <property type="project" value="TAIR"/>
</dbReference>
<dbReference type="GO" id="GO:0009749">
    <property type="term" value="P:response to glucose"/>
    <property type="evidence" value="ECO:0000270"/>
    <property type="project" value="UniProtKB"/>
</dbReference>
<dbReference type="GO" id="GO:0009408">
    <property type="term" value="P:response to heat"/>
    <property type="evidence" value="ECO:0000270"/>
    <property type="project" value="UniProtKB"/>
</dbReference>
<dbReference type="GO" id="GO:0009416">
    <property type="term" value="P:response to light stimulus"/>
    <property type="evidence" value="ECO:0000270"/>
    <property type="project" value="UniProtKB"/>
</dbReference>
<dbReference type="GO" id="GO:0002237">
    <property type="term" value="P:response to molecule of bacterial origin"/>
    <property type="evidence" value="ECO:0000270"/>
    <property type="project" value="UniProtKB"/>
</dbReference>
<dbReference type="CDD" id="cd00318">
    <property type="entry name" value="Phosphoglycerate_kinase"/>
    <property type="match status" value="1"/>
</dbReference>
<dbReference type="FunFam" id="3.40.50.1260:FF:000003">
    <property type="entry name" value="Phosphoglycerate kinase"/>
    <property type="match status" value="1"/>
</dbReference>
<dbReference type="FunFam" id="3.40.50.1260:FF:000006">
    <property type="entry name" value="Phosphoglycerate kinase"/>
    <property type="match status" value="1"/>
</dbReference>
<dbReference type="Gene3D" id="3.40.50.1260">
    <property type="entry name" value="Phosphoglycerate kinase, N-terminal domain"/>
    <property type="match status" value="2"/>
</dbReference>
<dbReference type="HAMAP" id="MF_00145">
    <property type="entry name" value="Phosphoglyc_kinase"/>
    <property type="match status" value="1"/>
</dbReference>
<dbReference type="InterPro" id="IPR001576">
    <property type="entry name" value="Phosphoglycerate_kinase"/>
</dbReference>
<dbReference type="InterPro" id="IPR015824">
    <property type="entry name" value="Phosphoglycerate_kinase_N"/>
</dbReference>
<dbReference type="InterPro" id="IPR036043">
    <property type="entry name" value="Phosphoglycerate_kinase_sf"/>
</dbReference>
<dbReference type="PANTHER" id="PTHR11406">
    <property type="entry name" value="PHOSPHOGLYCERATE KINASE"/>
    <property type="match status" value="1"/>
</dbReference>
<dbReference type="PANTHER" id="PTHR11406:SF27">
    <property type="entry name" value="PHOSPHOGLYCERATE KINASE 3, CYTOSOLIC"/>
    <property type="match status" value="1"/>
</dbReference>
<dbReference type="Pfam" id="PF00162">
    <property type="entry name" value="PGK"/>
    <property type="match status" value="1"/>
</dbReference>
<dbReference type="PIRSF" id="PIRSF000724">
    <property type="entry name" value="Pgk"/>
    <property type="match status" value="1"/>
</dbReference>
<dbReference type="PRINTS" id="PR00477">
    <property type="entry name" value="PHGLYCKINASE"/>
</dbReference>
<dbReference type="SUPFAM" id="SSF53748">
    <property type="entry name" value="Phosphoglycerate kinase"/>
    <property type="match status" value="1"/>
</dbReference>
<evidence type="ECO:0000250" key="1">
    <source>
        <dbReference type="UniProtKB" id="P00558"/>
    </source>
</evidence>
<evidence type="ECO:0000250" key="2">
    <source>
        <dbReference type="UniProtKB" id="P00560"/>
    </source>
</evidence>
<evidence type="ECO:0000250" key="3">
    <source>
        <dbReference type="UniProtKB" id="P07378"/>
    </source>
</evidence>
<evidence type="ECO:0000250" key="4">
    <source>
        <dbReference type="UniProtKB" id="Q7SIB7"/>
    </source>
</evidence>
<evidence type="ECO:0000269" key="5">
    <source>
    </source>
</evidence>
<evidence type="ECO:0000269" key="6">
    <source>
    </source>
</evidence>
<evidence type="ECO:0000269" key="7">
    <source>
    </source>
</evidence>
<evidence type="ECO:0000269" key="8">
    <source>
    </source>
</evidence>
<evidence type="ECO:0000269" key="9">
    <source>
    </source>
</evidence>
<evidence type="ECO:0000269" key="10">
    <source>
    </source>
</evidence>
<evidence type="ECO:0000269" key="11">
    <source>
    </source>
</evidence>
<evidence type="ECO:0000303" key="12">
    <source>
    </source>
</evidence>
<evidence type="ECO:0000305" key="13"/>
<evidence type="ECO:0000312" key="14">
    <source>
        <dbReference type="Araport" id="AT1G79550"/>
    </source>
</evidence>
<evidence type="ECO:0000312" key="15">
    <source>
        <dbReference type="EMBL" id="AAD30221.1"/>
    </source>
</evidence>